<comment type="function">
    <text evidence="1">Found at the monomer-monomer interface of the photosystem II (PS II) dimer, plays a role in assembly and dimerization of PSII. PSII is a light-driven water plastoquinone oxidoreductase, using light energy to abstract electrons from H(2)O, generating a proton gradient subsequently used for ATP formation.</text>
</comment>
<comment type="subunit">
    <text evidence="1">PSII is composed of 1 copy each of membrane proteins PsbA, PsbB, PsbC, PsbD, PsbE, PsbF, PsbH, PsbI, PsbJ, PsbK, PsbL, PsbM, PsbT, PsbY, PsbZ, Psb30/Ycf12, at least 3 peripheral proteins of the oxygen-evolving complex and a large number of cofactors. It forms dimeric complexes.</text>
</comment>
<comment type="subcellular location">
    <subcellularLocation>
        <location evidence="1">Plastid</location>
        <location evidence="1">Chloroplast thylakoid membrane</location>
        <topology evidence="1">Single-pass membrane protein</topology>
    </subcellularLocation>
</comment>
<comment type="similarity">
    <text evidence="1">Belongs to the PsbT family.</text>
</comment>
<name>PSBT_SISMO</name>
<geneLocation type="chloroplast"/>
<gene>
    <name evidence="1" type="primary">psbT</name>
</gene>
<dbReference type="EMBL" id="AY147533">
    <property type="protein sequence ID" value="AAN32233.1"/>
    <property type="molecule type" value="Genomic_DNA"/>
</dbReference>
<dbReference type="SMR" id="Q67HX1"/>
<dbReference type="GO" id="GO:0009535">
    <property type="term" value="C:chloroplast thylakoid membrane"/>
    <property type="evidence" value="ECO:0007669"/>
    <property type="project" value="UniProtKB-SubCell"/>
</dbReference>
<dbReference type="GO" id="GO:0009539">
    <property type="term" value="C:photosystem II reaction center"/>
    <property type="evidence" value="ECO:0007669"/>
    <property type="project" value="InterPro"/>
</dbReference>
<dbReference type="GO" id="GO:0015979">
    <property type="term" value="P:photosynthesis"/>
    <property type="evidence" value="ECO:0007669"/>
    <property type="project" value="UniProtKB-UniRule"/>
</dbReference>
<dbReference type="HAMAP" id="MF_00808">
    <property type="entry name" value="PSII_PsbT"/>
    <property type="match status" value="1"/>
</dbReference>
<dbReference type="InterPro" id="IPR001743">
    <property type="entry name" value="PSII_PsbT"/>
</dbReference>
<dbReference type="InterPro" id="IPR037268">
    <property type="entry name" value="PSII_PsbT_sf"/>
</dbReference>
<dbReference type="PANTHER" id="PTHR36411">
    <property type="match status" value="1"/>
</dbReference>
<dbReference type="PANTHER" id="PTHR36411:SF2">
    <property type="entry name" value="PHOTOSYSTEM II REACTION CENTER PROTEIN T"/>
    <property type="match status" value="1"/>
</dbReference>
<dbReference type="Pfam" id="PF01405">
    <property type="entry name" value="PsbT"/>
    <property type="match status" value="1"/>
</dbReference>
<dbReference type="SUPFAM" id="SSF161029">
    <property type="entry name" value="Photosystem II reaction center protein T, PsbT"/>
    <property type="match status" value="1"/>
</dbReference>
<protein>
    <recommendedName>
        <fullName evidence="1">Photosystem II reaction center protein T</fullName>
        <shortName evidence="1">PSII-T</shortName>
    </recommendedName>
</protein>
<evidence type="ECO:0000255" key="1">
    <source>
        <dbReference type="HAMAP-Rule" id="MF_00808"/>
    </source>
</evidence>
<accession>Q67HX1</accession>
<reference key="1">
    <citation type="submission" date="2002-09" db="EMBL/GenBank/DDBJ databases">
        <title>Phylogenetic relationships among the major lineages of Asparagales based on a large chloroplast data set.</title>
        <authorList>
            <person name="McPherson M.A."/>
            <person name="Rai H.S."/>
            <person name="Wong W.A."/>
            <person name="Graham S.W."/>
        </authorList>
    </citation>
    <scope>NUCLEOTIDE SEQUENCE [GENOMIC DNA]</scope>
</reference>
<proteinExistence type="inferred from homology"/>
<sequence>MEALVYTFLLVSTLGIIFFAIFFREPPKVPTKK</sequence>
<organism>
    <name type="scientific">Sisyrinchium montanum</name>
    <name type="common">Strict blue-eyed grass</name>
    <dbReference type="NCBI Taxonomy" id="207934"/>
    <lineage>
        <taxon>Eukaryota</taxon>
        <taxon>Viridiplantae</taxon>
        <taxon>Streptophyta</taxon>
        <taxon>Embryophyta</taxon>
        <taxon>Tracheophyta</taxon>
        <taxon>Spermatophyta</taxon>
        <taxon>Magnoliopsida</taxon>
        <taxon>Liliopsida</taxon>
        <taxon>Asparagales</taxon>
        <taxon>Iridaceae</taxon>
        <taxon>Iridoideae</taxon>
        <taxon>Sisyrinchieae</taxon>
        <taxon>Sisyrinchium</taxon>
    </lineage>
</organism>
<feature type="chain" id="PRO_0000217982" description="Photosystem II reaction center protein T">
    <location>
        <begin position="1"/>
        <end position="33"/>
    </location>
</feature>
<feature type="transmembrane region" description="Helical" evidence="1">
    <location>
        <begin position="3"/>
        <end position="23"/>
    </location>
</feature>
<keyword id="KW-0150">Chloroplast</keyword>
<keyword id="KW-0472">Membrane</keyword>
<keyword id="KW-0602">Photosynthesis</keyword>
<keyword id="KW-0604">Photosystem II</keyword>
<keyword id="KW-0934">Plastid</keyword>
<keyword id="KW-0793">Thylakoid</keyword>
<keyword id="KW-0812">Transmembrane</keyword>
<keyword id="KW-1133">Transmembrane helix</keyword>